<evidence type="ECO:0000250" key="1"/>
<evidence type="ECO:0000250" key="2">
    <source>
        <dbReference type="UniProtKB" id="P10771"/>
    </source>
</evidence>
<evidence type="ECO:0000255" key="3">
    <source>
        <dbReference type="PROSITE-ProRule" id="PRU00837"/>
    </source>
</evidence>
<evidence type="ECO:0000256" key="4">
    <source>
        <dbReference type="SAM" id="MobiDB-lite"/>
    </source>
</evidence>
<comment type="function">
    <text evidence="1">Histones H1 are necessary for the condensation of nucleosome chains into higher-order structures.</text>
</comment>
<comment type="subcellular location">
    <subcellularLocation>
        <location evidence="3">Nucleus</location>
    </subcellularLocation>
    <subcellularLocation>
        <location evidence="3">Chromosome</location>
    </subcellularLocation>
</comment>
<comment type="similarity">
    <text evidence="3">Belongs to the histone H1/H5 family.</text>
</comment>
<proteinExistence type="evidence at transcript level"/>
<accession>O01833</accession>
<organism>
    <name type="scientific">Caenorhabditis elegans</name>
    <dbReference type="NCBI Taxonomy" id="6239"/>
    <lineage>
        <taxon>Eukaryota</taxon>
        <taxon>Metazoa</taxon>
        <taxon>Ecdysozoa</taxon>
        <taxon>Nematoda</taxon>
        <taxon>Chromadorea</taxon>
        <taxon>Rhabditida</taxon>
        <taxon>Rhabditina</taxon>
        <taxon>Rhabditomorpha</taxon>
        <taxon>Rhabditoidea</taxon>
        <taxon>Rhabditidae</taxon>
        <taxon>Peloderinae</taxon>
        <taxon>Caenorhabditis</taxon>
    </lineage>
</organism>
<reference key="1">
    <citation type="journal article" date="2001" name="Development">
        <title>A single histone H1 isoform (H1.1) is essential for chromatin silencing and germline development in Caenorhabditis elegans.</title>
        <authorList>
            <person name="Jedrusik M.A."/>
            <person name="Schulze E."/>
        </authorList>
    </citation>
    <scope>NUCLEOTIDE SEQUENCE [MRNA]</scope>
    <source>
        <strain>him-8</strain>
    </source>
</reference>
<reference key="2">
    <citation type="journal article" date="1998" name="Science">
        <title>Genome sequence of the nematode C. elegans: a platform for investigating biology.</title>
        <authorList>
            <consortium name="The C. elegans sequencing consortium"/>
        </authorList>
    </citation>
    <scope>NUCLEOTIDE SEQUENCE [LARGE SCALE GENOMIC DNA]</scope>
    <source>
        <strain>Bristol N2</strain>
    </source>
</reference>
<name>H15_CAEEL</name>
<dbReference type="EMBL" id="AF005372">
    <property type="protein sequence ID" value="AAB81030.1"/>
    <property type="molecule type" value="mRNA"/>
</dbReference>
<dbReference type="EMBL" id="FO080197">
    <property type="protein sequence ID" value="CCD61899.1"/>
    <property type="molecule type" value="Genomic_DNA"/>
</dbReference>
<dbReference type="PIR" id="T15228">
    <property type="entry name" value="T15228"/>
</dbReference>
<dbReference type="RefSeq" id="NP_491678.1">
    <property type="nucleotide sequence ID" value="NM_059277.6"/>
</dbReference>
<dbReference type="SMR" id="O01833"/>
<dbReference type="BioGRID" id="37697">
    <property type="interactions" value="2"/>
</dbReference>
<dbReference type="FunCoup" id="O01833">
    <property type="interactions" value="241"/>
</dbReference>
<dbReference type="STRING" id="6239.B0414.3.1"/>
<dbReference type="iPTMnet" id="O01833"/>
<dbReference type="PaxDb" id="6239-B0414.3"/>
<dbReference type="PeptideAtlas" id="O01833"/>
<dbReference type="EnsemblMetazoa" id="B0414.3.1">
    <property type="protein sequence ID" value="B0414.3.1"/>
    <property type="gene ID" value="WBGene00001856"/>
</dbReference>
<dbReference type="GeneID" id="172242"/>
<dbReference type="KEGG" id="cel:CELE_B0414.3"/>
<dbReference type="UCSC" id="B0414.3">
    <property type="organism name" value="c. elegans"/>
</dbReference>
<dbReference type="AGR" id="WB:WBGene00001856"/>
<dbReference type="CTD" id="172242"/>
<dbReference type="WormBase" id="B0414.3">
    <property type="protein sequence ID" value="CE07733"/>
    <property type="gene ID" value="WBGene00001856"/>
    <property type="gene designation" value="hil-5"/>
</dbReference>
<dbReference type="eggNOG" id="KOG4012">
    <property type="taxonomic scope" value="Eukaryota"/>
</dbReference>
<dbReference type="GeneTree" id="ENSGT00970000195980"/>
<dbReference type="HOGENOM" id="CLU_052897_1_1_1"/>
<dbReference type="InParanoid" id="O01833"/>
<dbReference type="OMA" id="PFINMIT"/>
<dbReference type="OrthoDB" id="1110759at2759"/>
<dbReference type="PRO" id="PR:O01833"/>
<dbReference type="Proteomes" id="UP000001940">
    <property type="component" value="Chromosome I"/>
</dbReference>
<dbReference type="Bgee" id="WBGene00001856">
    <property type="expression patterns" value="Expressed in germ line (C elegans) and 4 other cell types or tissues"/>
</dbReference>
<dbReference type="GO" id="GO:0000786">
    <property type="term" value="C:nucleosome"/>
    <property type="evidence" value="ECO:0007669"/>
    <property type="project" value="InterPro"/>
</dbReference>
<dbReference type="GO" id="GO:0005634">
    <property type="term" value="C:nucleus"/>
    <property type="evidence" value="ECO:0000318"/>
    <property type="project" value="GO_Central"/>
</dbReference>
<dbReference type="GO" id="GO:0003690">
    <property type="term" value="F:double-stranded DNA binding"/>
    <property type="evidence" value="ECO:0000318"/>
    <property type="project" value="GO_Central"/>
</dbReference>
<dbReference type="GO" id="GO:0031492">
    <property type="term" value="F:nucleosomal DNA binding"/>
    <property type="evidence" value="ECO:0000318"/>
    <property type="project" value="GO_Central"/>
</dbReference>
<dbReference type="GO" id="GO:0030527">
    <property type="term" value="F:structural constituent of chromatin"/>
    <property type="evidence" value="ECO:0007669"/>
    <property type="project" value="InterPro"/>
</dbReference>
<dbReference type="GO" id="GO:0030261">
    <property type="term" value="P:chromosome condensation"/>
    <property type="evidence" value="ECO:0000318"/>
    <property type="project" value="GO_Central"/>
</dbReference>
<dbReference type="GO" id="GO:0045910">
    <property type="term" value="P:negative regulation of DNA recombination"/>
    <property type="evidence" value="ECO:0000318"/>
    <property type="project" value="GO_Central"/>
</dbReference>
<dbReference type="GO" id="GO:0006334">
    <property type="term" value="P:nucleosome assembly"/>
    <property type="evidence" value="ECO:0007669"/>
    <property type="project" value="InterPro"/>
</dbReference>
<dbReference type="CDD" id="cd00073">
    <property type="entry name" value="H15"/>
    <property type="match status" value="1"/>
</dbReference>
<dbReference type="FunFam" id="1.10.10.10:FF:000140">
    <property type="entry name" value="Histone H1.0"/>
    <property type="match status" value="1"/>
</dbReference>
<dbReference type="Gene3D" id="1.10.10.10">
    <property type="entry name" value="Winged helix-like DNA-binding domain superfamily/Winged helix DNA-binding domain"/>
    <property type="match status" value="1"/>
</dbReference>
<dbReference type="InterPro" id="IPR005819">
    <property type="entry name" value="H1/H5"/>
</dbReference>
<dbReference type="InterPro" id="IPR005818">
    <property type="entry name" value="Histone_H1/H5_H15"/>
</dbReference>
<dbReference type="InterPro" id="IPR036388">
    <property type="entry name" value="WH-like_DNA-bd_sf"/>
</dbReference>
<dbReference type="InterPro" id="IPR036390">
    <property type="entry name" value="WH_DNA-bd_sf"/>
</dbReference>
<dbReference type="PANTHER" id="PTHR11467:SF36">
    <property type="entry name" value="HISTONE 24-RELATED"/>
    <property type="match status" value="1"/>
</dbReference>
<dbReference type="PANTHER" id="PTHR11467">
    <property type="entry name" value="HISTONE H1"/>
    <property type="match status" value="1"/>
</dbReference>
<dbReference type="Pfam" id="PF00538">
    <property type="entry name" value="Linker_histone"/>
    <property type="match status" value="1"/>
</dbReference>
<dbReference type="PRINTS" id="PR00624">
    <property type="entry name" value="HISTONEH5"/>
</dbReference>
<dbReference type="SMART" id="SM00526">
    <property type="entry name" value="H15"/>
    <property type="match status" value="1"/>
</dbReference>
<dbReference type="SUPFAM" id="SSF46785">
    <property type="entry name" value="Winged helix' DNA-binding domain"/>
    <property type="match status" value="1"/>
</dbReference>
<dbReference type="PROSITE" id="PS51504">
    <property type="entry name" value="H15"/>
    <property type="match status" value="1"/>
</dbReference>
<gene>
    <name type="primary">hil-5</name>
    <name type="ORF">B0414.3</name>
</gene>
<protein>
    <recommendedName>
        <fullName>Histone H1.5</fullName>
    </recommendedName>
    <alternativeName>
        <fullName>Histone H1-like protein 5</fullName>
    </alternativeName>
</protein>
<sequence length="225" mass="23390">MSDVAVAETPAVKTPTKASKATKAKATKIPKVKVVAAHPPFINMITEAVSNLKDRKGSSRVAIFKFITAKYTLGDQVNKTNAHLRSALKKGVVSKVLVQTNGIGANGRFRLAVAEKPPAVKKAATGEQKVMKTVAKKAVSGDKAKKTVAKKTGDKVKKVKSPKRIAKPAVKKVTKKAAAPTKSAANETAPKKAAATEAAPKKAAVTKAATKKTPARKAVGTAPKA</sequence>
<feature type="initiator methionine" description="Removed" evidence="2">
    <location>
        <position position="1"/>
    </location>
</feature>
<feature type="chain" id="PRO_0000195985" description="Histone H1.5">
    <location>
        <begin position="2"/>
        <end position="225"/>
    </location>
</feature>
<feature type="domain" description="H15" evidence="3">
    <location>
        <begin position="37"/>
        <end position="113"/>
    </location>
</feature>
<feature type="region of interest" description="Disordered" evidence="4">
    <location>
        <begin position="1"/>
        <end position="23"/>
    </location>
</feature>
<feature type="region of interest" description="Disordered" evidence="4">
    <location>
        <begin position="145"/>
        <end position="225"/>
    </location>
</feature>
<feature type="compositionally biased region" description="Low complexity" evidence="4">
    <location>
        <begin position="9"/>
        <end position="19"/>
    </location>
</feature>
<feature type="compositionally biased region" description="Basic and acidic residues" evidence="4">
    <location>
        <begin position="145"/>
        <end position="156"/>
    </location>
</feature>
<feature type="compositionally biased region" description="Basic residues" evidence="4">
    <location>
        <begin position="157"/>
        <end position="175"/>
    </location>
</feature>
<feature type="compositionally biased region" description="Low complexity" evidence="4">
    <location>
        <begin position="176"/>
        <end position="208"/>
    </location>
</feature>
<feature type="modified residue" description="N-acetylserine" evidence="2">
    <location>
        <position position="2"/>
    </location>
</feature>
<keyword id="KW-0007">Acetylation</keyword>
<keyword id="KW-0158">Chromosome</keyword>
<keyword id="KW-0238">DNA-binding</keyword>
<keyword id="KW-0539">Nucleus</keyword>
<keyword id="KW-1185">Reference proteome</keyword>